<gene>
    <name evidence="1" type="primary">lexA</name>
    <name type="ordered locus">Asuc_0877</name>
</gene>
<accession>A6VMQ0</accession>
<name>LEXA_ACTSZ</name>
<protein>
    <recommendedName>
        <fullName evidence="1">LexA repressor</fullName>
        <ecNumber evidence="1">3.4.21.88</ecNumber>
    </recommendedName>
</protein>
<evidence type="ECO:0000255" key="1">
    <source>
        <dbReference type="HAMAP-Rule" id="MF_00015"/>
    </source>
</evidence>
<keyword id="KW-0068">Autocatalytic cleavage</keyword>
<keyword id="KW-0227">DNA damage</keyword>
<keyword id="KW-0234">DNA repair</keyword>
<keyword id="KW-0235">DNA replication</keyword>
<keyword id="KW-0238">DNA-binding</keyword>
<keyword id="KW-0378">Hydrolase</keyword>
<keyword id="KW-1185">Reference proteome</keyword>
<keyword id="KW-0678">Repressor</keyword>
<keyword id="KW-0742">SOS response</keyword>
<keyword id="KW-0804">Transcription</keyword>
<keyword id="KW-0805">Transcription regulation</keyword>
<sequence>MSLVKPLTARQQEVYNFLKHYIETTGMPPTRAEISRELGFRSPNAAEEHLKALARKGAVEILAGTSRGIRLLLDAANDEPEGLPLIGQVAAGEPILAEQHIEGTYRVDPDMFKPQADFLLKVNGQSMKNIGILDGDLLAVHSTKDVRNGQVIVARIEDEVTVKRLERKGDVIYLHAENEEFAPIVVNLREQERFEIEGIAVGIIRNNAWM</sequence>
<feature type="chain" id="PRO_1000070963" description="LexA repressor">
    <location>
        <begin position="1"/>
        <end position="210"/>
    </location>
</feature>
<feature type="DNA-binding region" description="H-T-H motif" evidence="1">
    <location>
        <begin position="31"/>
        <end position="51"/>
    </location>
</feature>
<feature type="active site" description="For autocatalytic cleavage activity" evidence="1">
    <location>
        <position position="126"/>
    </location>
</feature>
<feature type="active site" description="For autocatalytic cleavage activity" evidence="1">
    <location>
        <position position="163"/>
    </location>
</feature>
<feature type="site" description="Cleavage; by autolysis" evidence="1">
    <location>
        <begin position="91"/>
        <end position="92"/>
    </location>
</feature>
<proteinExistence type="inferred from homology"/>
<comment type="function">
    <text evidence="1">Represses a number of genes involved in the response to DNA damage (SOS response), including recA and lexA. In the presence of single-stranded DNA, RecA interacts with LexA causing an autocatalytic cleavage which disrupts the DNA-binding part of LexA, leading to derepression of the SOS regulon and eventually DNA repair.</text>
</comment>
<comment type="catalytic activity">
    <reaction evidence="1">
        <text>Hydrolysis of Ala-|-Gly bond in repressor LexA.</text>
        <dbReference type="EC" id="3.4.21.88"/>
    </reaction>
</comment>
<comment type="subunit">
    <text evidence="1">Homodimer.</text>
</comment>
<comment type="similarity">
    <text evidence="1">Belongs to the peptidase S24 family.</text>
</comment>
<dbReference type="EC" id="3.4.21.88" evidence="1"/>
<dbReference type="EMBL" id="CP000746">
    <property type="protein sequence ID" value="ABR74247.1"/>
    <property type="molecule type" value="Genomic_DNA"/>
</dbReference>
<dbReference type="RefSeq" id="WP_012072625.1">
    <property type="nucleotide sequence ID" value="NC_009655.1"/>
</dbReference>
<dbReference type="SMR" id="A6VMQ0"/>
<dbReference type="STRING" id="339671.Asuc_0877"/>
<dbReference type="MEROPS" id="S24.001"/>
<dbReference type="KEGG" id="asu:Asuc_0877"/>
<dbReference type="eggNOG" id="COG1974">
    <property type="taxonomic scope" value="Bacteria"/>
</dbReference>
<dbReference type="HOGENOM" id="CLU_066192_45_3_6"/>
<dbReference type="OrthoDB" id="9802364at2"/>
<dbReference type="Proteomes" id="UP000001114">
    <property type="component" value="Chromosome"/>
</dbReference>
<dbReference type="GO" id="GO:0003677">
    <property type="term" value="F:DNA binding"/>
    <property type="evidence" value="ECO:0007669"/>
    <property type="project" value="UniProtKB-UniRule"/>
</dbReference>
<dbReference type="GO" id="GO:0004252">
    <property type="term" value="F:serine-type endopeptidase activity"/>
    <property type="evidence" value="ECO:0007669"/>
    <property type="project" value="UniProtKB-UniRule"/>
</dbReference>
<dbReference type="GO" id="GO:0006281">
    <property type="term" value="P:DNA repair"/>
    <property type="evidence" value="ECO:0007669"/>
    <property type="project" value="UniProtKB-UniRule"/>
</dbReference>
<dbReference type="GO" id="GO:0006260">
    <property type="term" value="P:DNA replication"/>
    <property type="evidence" value="ECO:0007669"/>
    <property type="project" value="UniProtKB-UniRule"/>
</dbReference>
<dbReference type="GO" id="GO:0045892">
    <property type="term" value="P:negative regulation of DNA-templated transcription"/>
    <property type="evidence" value="ECO:0007669"/>
    <property type="project" value="UniProtKB-UniRule"/>
</dbReference>
<dbReference type="GO" id="GO:0006508">
    <property type="term" value="P:proteolysis"/>
    <property type="evidence" value="ECO:0007669"/>
    <property type="project" value="InterPro"/>
</dbReference>
<dbReference type="GO" id="GO:0009432">
    <property type="term" value="P:SOS response"/>
    <property type="evidence" value="ECO:0007669"/>
    <property type="project" value="UniProtKB-UniRule"/>
</dbReference>
<dbReference type="CDD" id="cd06529">
    <property type="entry name" value="S24_LexA-like"/>
    <property type="match status" value="1"/>
</dbReference>
<dbReference type="FunFam" id="1.10.10.10:FF:000009">
    <property type="entry name" value="LexA repressor"/>
    <property type="match status" value="1"/>
</dbReference>
<dbReference type="FunFam" id="2.10.109.10:FF:000001">
    <property type="entry name" value="LexA repressor"/>
    <property type="match status" value="1"/>
</dbReference>
<dbReference type="Gene3D" id="2.10.109.10">
    <property type="entry name" value="Umud Fragment, subunit A"/>
    <property type="match status" value="1"/>
</dbReference>
<dbReference type="Gene3D" id="1.10.10.10">
    <property type="entry name" value="Winged helix-like DNA-binding domain superfamily/Winged helix DNA-binding domain"/>
    <property type="match status" value="1"/>
</dbReference>
<dbReference type="HAMAP" id="MF_00015">
    <property type="entry name" value="LexA"/>
    <property type="match status" value="1"/>
</dbReference>
<dbReference type="InterPro" id="IPR006200">
    <property type="entry name" value="LexA"/>
</dbReference>
<dbReference type="InterPro" id="IPR039418">
    <property type="entry name" value="LexA-like"/>
</dbReference>
<dbReference type="InterPro" id="IPR036286">
    <property type="entry name" value="LexA/Signal_pep-like_sf"/>
</dbReference>
<dbReference type="InterPro" id="IPR006199">
    <property type="entry name" value="LexA_DNA-bd_dom"/>
</dbReference>
<dbReference type="InterPro" id="IPR050077">
    <property type="entry name" value="LexA_repressor"/>
</dbReference>
<dbReference type="InterPro" id="IPR006197">
    <property type="entry name" value="Peptidase_S24_LexA"/>
</dbReference>
<dbReference type="InterPro" id="IPR015927">
    <property type="entry name" value="Peptidase_S24_S26A/B/C"/>
</dbReference>
<dbReference type="InterPro" id="IPR036388">
    <property type="entry name" value="WH-like_DNA-bd_sf"/>
</dbReference>
<dbReference type="InterPro" id="IPR036390">
    <property type="entry name" value="WH_DNA-bd_sf"/>
</dbReference>
<dbReference type="NCBIfam" id="TIGR00498">
    <property type="entry name" value="lexA"/>
    <property type="match status" value="1"/>
</dbReference>
<dbReference type="PANTHER" id="PTHR33516">
    <property type="entry name" value="LEXA REPRESSOR"/>
    <property type="match status" value="1"/>
</dbReference>
<dbReference type="PANTHER" id="PTHR33516:SF2">
    <property type="entry name" value="LEXA REPRESSOR-RELATED"/>
    <property type="match status" value="1"/>
</dbReference>
<dbReference type="Pfam" id="PF01726">
    <property type="entry name" value="LexA_DNA_bind"/>
    <property type="match status" value="1"/>
</dbReference>
<dbReference type="Pfam" id="PF00717">
    <property type="entry name" value="Peptidase_S24"/>
    <property type="match status" value="1"/>
</dbReference>
<dbReference type="PRINTS" id="PR00726">
    <property type="entry name" value="LEXASERPTASE"/>
</dbReference>
<dbReference type="SUPFAM" id="SSF51306">
    <property type="entry name" value="LexA/Signal peptidase"/>
    <property type="match status" value="1"/>
</dbReference>
<dbReference type="SUPFAM" id="SSF46785">
    <property type="entry name" value="Winged helix' DNA-binding domain"/>
    <property type="match status" value="1"/>
</dbReference>
<organism>
    <name type="scientific">Actinobacillus succinogenes (strain ATCC 55618 / DSM 22257 / CCUG 43843 / 130Z)</name>
    <dbReference type="NCBI Taxonomy" id="339671"/>
    <lineage>
        <taxon>Bacteria</taxon>
        <taxon>Pseudomonadati</taxon>
        <taxon>Pseudomonadota</taxon>
        <taxon>Gammaproteobacteria</taxon>
        <taxon>Pasteurellales</taxon>
        <taxon>Pasteurellaceae</taxon>
        <taxon>Actinobacillus</taxon>
    </lineage>
</organism>
<reference key="1">
    <citation type="journal article" date="2010" name="BMC Genomics">
        <title>A genomic perspective on the potential of Actinobacillus succinogenes for industrial succinate production.</title>
        <authorList>
            <person name="McKinlay J.B."/>
            <person name="Laivenieks M."/>
            <person name="Schindler B.D."/>
            <person name="McKinlay A.A."/>
            <person name="Siddaramappa S."/>
            <person name="Challacombe J.F."/>
            <person name="Lowry S.R."/>
            <person name="Clum A."/>
            <person name="Lapidus A.L."/>
            <person name="Burkhart K.B."/>
            <person name="Harkins V."/>
            <person name="Vieille C."/>
        </authorList>
    </citation>
    <scope>NUCLEOTIDE SEQUENCE [LARGE SCALE GENOMIC DNA]</scope>
    <source>
        <strain>ATCC 55618 / DSM 22257 / CCUG 43843 / 130Z</strain>
    </source>
</reference>